<evidence type="ECO:0000255" key="1">
    <source>
        <dbReference type="HAMAP-Rule" id="MF_00061"/>
    </source>
</evidence>
<name>ISPE_LISMF</name>
<gene>
    <name evidence="1" type="primary">ispE</name>
    <name type="ordered locus">LMOf2365_0201</name>
</gene>
<accession>Q724M3</accession>
<comment type="function">
    <text evidence="1">Catalyzes the phosphorylation of the position 2 hydroxy group of 4-diphosphocytidyl-2C-methyl-D-erythritol.</text>
</comment>
<comment type="catalytic activity">
    <reaction evidence="1">
        <text>4-CDP-2-C-methyl-D-erythritol + ATP = 4-CDP-2-C-methyl-D-erythritol 2-phosphate + ADP + H(+)</text>
        <dbReference type="Rhea" id="RHEA:18437"/>
        <dbReference type="ChEBI" id="CHEBI:15378"/>
        <dbReference type="ChEBI" id="CHEBI:30616"/>
        <dbReference type="ChEBI" id="CHEBI:57823"/>
        <dbReference type="ChEBI" id="CHEBI:57919"/>
        <dbReference type="ChEBI" id="CHEBI:456216"/>
        <dbReference type="EC" id="2.7.1.148"/>
    </reaction>
</comment>
<comment type="pathway">
    <text evidence="1">Isoprenoid biosynthesis; isopentenyl diphosphate biosynthesis via DXP pathway; isopentenyl diphosphate from 1-deoxy-D-xylulose 5-phosphate: step 3/6.</text>
</comment>
<comment type="similarity">
    <text evidence="1">Belongs to the GHMP kinase family. IspE subfamily.</text>
</comment>
<proteinExistence type="inferred from homology"/>
<feature type="chain" id="PRO_0000189231" description="4-diphosphocytidyl-2-C-methyl-D-erythritol kinase">
    <location>
        <begin position="1"/>
        <end position="293"/>
    </location>
</feature>
<feature type="active site" evidence="1">
    <location>
        <position position="10"/>
    </location>
</feature>
<feature type="active site" evidence="1">
    <location>
        <position position="136"/>
    </location>
</feature>
<feature type="binding site" evidence="1">
    <location>
        <begin position="94"/>
        <end position="104"/>
    </location>
    <ligand>
        <name>ATP</name>
        <dbReference type="ChEBI" id="CHEBI:30616"/>
    </ligand>
</feature>
<reference key="1">
    <citation type="journal article" date="2004" name="Nucleic Acids Res.">
        <title>Whole genome comparisons of serotype 4b and 1/2a strains of the food-borne pathogen Listeria monocytogenes reveal new insights into the core genome components of this species.</title>
        <authorList>
            <person name="Nelson K.E."/>
            <person name="Fouts D.E."/>
            <person name="Mongodin E.F."/>
            <person name="Ravel J."/>
            <person name="DeBoy R.T."/>
            <person name="Kolonay J.F."/>
            <person name="Rasko D.A."/>
            <person name="Angiuoli S.V."/>
            <person name="Gill S.R."/>
            <person name="Paulsen I.T."/>
            <person name="Peterson J.D."/>
            <person name="White O."/>
            <person name="Nelson W.C."/>
            <person name="Nierman W.C."/>
            <person name="Beanan M.J."/>
            <person name="Brinkac L.M."/>
            <person name="Daugherty S.C."/>
            <person name="Dodson R.J."/>
            <person name="Durkin A.S."/>
            <person name="Madupu R."/>
            <person name="Haft D.H."/>
            <person name="Selengut J."/>
            <person name="Van Aken S.E."/>
            <person name="Khouri H.M."/>
            <person name="Fedorova N."/>
            <person name="Forberger H.A."/>
            <person name="Tran B."/>
            <person name="Kathariou S."/>
            <person name="Wonderling L.D."/>
            <person name="Uhlich G.A."/>
            <person name="Bayles D.O."/>
            <person name="Luchansky J.B."/>
            <person name="Fraser C.M."/>
        </authorList>
    </citation>
    <scope>NUCLEOTIDE SEQUENCE [LARGE SCALE GENOMIC DNA]</scope>
    <source>
        <strain>F2365</strain>
    </source>
</reference>
<dbReference type="EC" id="2.7.1.148" evidence="1"/>
<dbReference type="EMBL" id="AE017262">
    <property type="protein sequence ID" value="AAT02988.1"/>
    <property type="molecule type" value="Genomic_DNA"/>
</dbReference>
<dbReference type="RefSeq" id="WP_003725506.1">
    <property type="nucleotide sequence ID" value="NC_002973.6"/>
</dbReference>
<dbReference type="SMR" id="Q724M3"/>
<dbReference type="KEGG" id="lmf:LMOf2365_0201"/>
<dbReference type="HOGENOM" id="CLU_053057_1_1_9"/>
<dbReference type="UniPathway" id="UPA00056">
    <property type="reaction ID" value="UER00094"/>
</dbReference>
<dbReference type="GO" id="GO:0050515">
    <property type="term" value="F:4-(cytidine 5'-diphospho)-2-C-methyl-D-erythritol kinase activity"/>
    <property type="evidence" value="ECO:0007669"/>
    <property type="project" value="UniProtKB-UniRule"/>
</dbReference>
<dbReference type="GO" id="GO:0005524">
    <property type="term" value="F:ATP binding"/>
    <property type="evidence" value="ECO:0007669"/>
    <property type="project" value="UniProtKB-UniRule"/>
</dbReference>
<dbReference type="GO" id="GO:0019288">
    <property type="term" value="P:isopentenyl diphosphate biosynthetic process, methylerythritol 4-phosphate pathway"/>
    <property type="evidence" value="ECO:0007669"/>
    <property type="project" value="UniProtKB-UniRule"/>
</dbReference>
<dbReference type="GO" id="GO:0016114">
    <property type="term" value="P:terpenoid biosynthetic process"/>
    <property type="evidence" value="ECO:0007669"/>
    <property type="project" value="InterPro"/>
</dbReference>
<dbReference type="FunFam" id="3.30.230.10:FF:000029">
    <property type="entry name" value="4-diphosphocytidyl-2-C-methyl-D-erythritol kinase"/>
    <property type="match status" value="1"/>
</dbReference>
<dbReference type="FunFam" id="3.30.70.890:FF:000006">
    <property type="entry name" value="4-diphosphocytidyl-2-C-methyl-D-erythritol kinase"/>
    <property type="match status" value="1"/>
</dbReference>
<dbReference type="Gene3D" id="3.30.230.10">
    <property type="match status" value="1"/>
</dbReference>
<dbReference type="Gene3D" id="3.30.70.890">
    <property type="entry name" value="GHMP kinase, C-terminal domain"/>
    <property type="match status" value="1"/>
</dbReference>
<dbReference type="HAMAP" id="MF_00061">
    <property type="entry name" value="IspE"/>
    <property type="match status" value="1"/>
</dbReference>
<dbReference type="InterPro" id="IPR013750">
    <property type="entry name" value="GHMP_kinase_C_dom"/>
</dbReference>
<dbReference type="InterPro" id="IPR036554">
    <property type="entry name" value="GHMP_kinase_C_sf"/>
</dbReference>
<dbReference type="InterPro" id="IPR006204">
    <property type="entry name" value="GHMP_kinase_N_dom"/>
</dbReference>
<dbReference type="InterPro" id="IPR004424">
    <property type="entry name" value="IspE"/>
</dbReference>
<dbReference type="InterPro" id="IPR020568">
    <property type="entry name" value="Ribosomal_Su5_D2-typ_SF"/>
</dbReference>
<dbReference type="InterPro" id="IPR014721">
    <property type="entry name" value="Ribsml_uS5_D2-typ_fold_subgr"/>
</dbReference>
<dbReference type="NCBIfam" id="TIGR00154">
    <property type="entry name" value="ispE"/>
    <property type="match status" value="1"/>
</dbReference>
<dbReference type="NCBIfam" id="NF011202">
    <property type="entry name" value="PRK14608.1"/>
    <property type="match status" value="1"/>
</dbReference>
<dbReference type="PANTHER" id="PTHR43527">
    <property type="entry name" value="4-DIPHOSPHOCYTIDYL-2-C-METHYL-D-ERYTHRITOL KINASE, CHLOROPLASTIC"/>
    <property type="match status" value="1"/>
</dbReference>
<dbReference type="PANTHER" id="PTHR43527:SF2">
    <property type="entry name" value="4-DIPHOSPHOCYTIDYL-2-C-METHYL-D-ERYTHRITOL KINASE, CHLOROPLASTIC"/>
    <property type="match status" value="1"/>
</dbReference>
<dbReference type="Pfam" id="PF08544">
    <property type="entry name" value="GHMP_kinases_C"/>
    <property type="match status" value="1"/>
</dbReference>
<dbReference type="Pfam" id="PF00288">
    <property type="entry name" value="GHMP_kinases_N"/>
    <property type="match status" value="1"/>
</dbReference>
<dbReference type="PIRSF" id="PIRSF010376">
    <property type="entry name" value="IspE"/>
    <property type="match status" value="1"/>
</dbReference>
<dbReference type="SUPFAM" id="SSF55060">
    <property type="entry name" value="GHMP Kinase, C-terminal domain"/>
    <property type="match status" value="1"/>
</dbReference>
<dbReference type="SUPFAM" id="SSF54211">
    <property type="entry name" value="Ribosomal protein S5 domain 2-like"/>
    <property type="match status" value="1"/>
</dbReference>
<keyword id="KW-0067">ATP-binding</keyword>
<keyword id="KW-0414">Isoprene biosynthesis</keyword>
<keyword id="KW-0418">Kinase</keyword>
<keyword id="KW-0547">Nucleotide-binding</keyword>
<keyword id="KW-0808">Transferase</keyword>
<organism>
    <name type="scientific">Listeria monocytogenes serotype 4b (strain F2365)</name>
    <dbReference type="NCBI Taxonomy" id="265669"/>
    <lineage>
        <taxon>Bacteria</taxon>
        <taxon>Bacillati</taxon>
        <taxon>Bacillota</taxon>
        <taxon>Bacilli</taxon>
        <taxon>Bacillales</taxon>
        <taxon>Listeriaceae</taxon>
        <taxon>Listeria</taxon>
    </lineage>
</organism>
<sequence length="293" mass="32203">MKISITAPAKINLSLDALYKREDGYHEVEMVMTTIDLADRLYLERLDEDKIVLDVKAHFIPEDRRNLIYQAALLLKKRFDVKMGVRITIDKHIPVSAGLAGGSSDAAAALKGLNVIWELGLSIEELAEISSEIGSDIAFCVYGGTALATGRGEKISALPNIPGCWIVLAKPSISVSTPTIYKELQVDNVEHPDTQKMIESIKNGDLDGIFASTGNVLESVTLEKNPQVKRIKDRMLAFGAEAALMSGSGPTVFALIKQYSRAKRVYNGLRGFCEEVYMVRPWSEGENDTNINN</sequence>
<protein>
    <recommendedName>
        <fullName evidence="1">4-diphosphocytidyl-2-C-methyl-D-erythritol kinase</fullName>
        <shortName evidence="1">CMK</shortName>
        <ecNumber evidence="1">2.7.1.148</ecNumber>
    </recommendedName>
    <alternativeName>
        <fullName evidence="1">4-(cytidine-5'-diphospho)-2-C-methyl-D-erythritol kinase</fullName>
    </alternativeName>
</protein>